<organism>
    <name type="scientific">Natronomonas pharaonis (strain ATCC 35678 / DSM 2160 / CIP 103997 / JCM 8858 / NBRC 14720 / NCIMB 2260 / Gabara)</name>
    <name type="common">Halobacterium pharaonis</name>
    <dbReference type="NCBI Taxonomy" id="348780"/>
    <lineage>
        <taxon>Archaea</taxon>
        <taxon>Methanobacteriati</taxon>
        <taxon>Methanobacteriota</taxon>
        <taxon>Stenosarchaea group</taxon>
        <taxon>Halobacteria</taxon>
        <taxon>Halobacteriales</taxon>
        <taxon>Haloarculaceae</taxon>
        <taxon>Natronomonas</taxon>
    </lineage>
</organism>
<comment type="similarity">
    <text evidence="1">Belongs to the UPF0440 family.</text>
</comment>
<dbReference type="EMBL" id="CR936257">
    <property type="protein sequence ID" value="CAI48398.1"/>
    <property type="molecule type" value="Genomic_DNA"/>
</dbReference>
<dbReference type="RefSeq" id="WP_011322034.1">
    <property type="nucleotide sequence ID" value="NC_007426.1"/>
</dbReference>
<dbReference type="SMR" id="Q3ITY5"/>
<dbReference type="STRING" id="348780.NP_0614A"/>
<dbReference type="EnsemblBacteria" id="CAI48398">
    <property type="protein sequence ID" value="CAI48398"/>
    <property type="gene ID" value="NP_0614A"/>
</dbReference>
<dbReference type="GeneID" id="3700905"/>
<dbReference type="KEGG" id="nph:NP_0614A"/>
<dbReference type="eggNOG" id="arCOG04665">
    <property type="taxonomic scope" value="Archaea"/>
</dbReference>
<dbReference type="HOGENOM" id="CLU_190390_0_0_2"/>
<dbReference type="OrthoDB" id="213887at2157"/>
<dbReference type="Proteomes" id="UP000002698">
    <property type="component" value="Chromosome"/>
</dbReference>
<dbReference type="Gene3D" id="3.30.300.100">
    <property type="entry name" value="MTH677-like"/>
    <property type="match status" value="1"/>
</dbReference>
<dbReference type="InterPro" id="IPR024502">
    <property type="entry name" value="DUF3194"/>
</dbReference>
<dbReference type="InterPro" id="IPR035954">
    <property type="entry name" value="MTH677-like_sf"/>
</dbReference>
<dbReference type="Pfam" id="PF11419">
    <property type="entry name" value="DUF3194"/>
    <property type="match status" value="1"/>
</dbReference>
<dbReference type="SUPFAM" id="SSF110783">
    <property type="entry name" value="Hypothetical protein MTH677"/>
    <property type="match status" value="1"/>
</dbReference>
<feature type="chain" id="PRO_0000293126" description="Uncharacterized protein NP_0614A">
    <location>
        <begin position="1"/>
        <end position="83"/>
    </location>
</feature>
<sequence>MTADDSDEPTADEIVEVASDAAEGLILSRYKQSEVTDMDVTVRFEDGTLDVDIYLNAPDDPDPGAVAQEAVEAAESAVDELFE</sequence>
<evidence type="ECO:0000305" key="1"/>
<reference key="1">
    <citation type="journal article" date="2005" name="Genome Res.">
        <title>Living with two extremes: conclusions from the genome sequence of Natronomonas pharaonis.</title>
        <authorList>
            <person name="Falb M."/>
            <person name="Pfeiffer F."/>
            <person name="Palm P."/>
            <person name="Rodewald K."/>
            <person name="Hickmann V."/>
            <person name="Tittor J."/>
            <person name="Oesterhelt D."/>
        </authorList>
    </citation>
    <scope>NUCLEOTIDE SEQUENCE [LARGE SCALE GENOMIC DNA]</scope>
    <source>
        <strain>ATCC 35678 / DSM 2160 / CIP 103997 / JCM 8858 / NBRC 14720 / NCIMB 2260 / Gabara</strain>
    </source>
</reference>
<proteinExistence type="inferred from homology"/>
<name>Y614A_NATPD</name>
<protein>
    <recommendedName>
        <fullName>Uncharacterized protein NP_0614A</fullName>
    </recommendedName>
</protein>
<accession>Q3ITY5</accession>
<keyword id="KW-1185">Reference proteome</keyword>
<gene>
    <name type="ordered locus">NP_0614A</name>
</gene>